<reference key="1">
    <citation type="journal article" date="2009" name="Proc. Natl. Acad. Sci. U.S.A.">
        <title>Biogeography of the Sulfolobus islandicus pan-genome.</title>
        <authorList>
            <person name="Reno M.L."/>
            <person name="Held N.L."/>
            <person name="Fields C.J."/>
            <person name="Burke P.V."/>
            <person name="Whitaker R.J."/>
        </authorList>
    </citation>
    <scope>NUCLEOTIDE SEQUENCE [LARGE SCALE GENOMIC DNA]</scope>
    <source>
        <strain>M.16.4 / Kamchatka #3</strain>
    </source>
</reference>
<name>NDK_SACI6</name>
<accession>C4KIV4</accession>
<dbReference type="EC" id="2.7.4.6" evidence="1"/>
<dbReference type="EMBL" id="CP001402">
    <property type="protein sequence ID" value="ACR42518.1"/>
    <property type="molecule type" value="Genomic_DNA"/>
</dbReference>
<dbReference type="RefSeq" id="WP_012711881.1">
    <property type="nucleotide sequence ID" value="NC_012726.1"/>
</dbReference>
<dbReference type="SMR" id="C4KIV4"/>
<dbReference type="GeneID" id="84062220"/>
<dbReference type="KEGG" id="sid:M164_1915"/>
<dbReference type="HOGENOM" id="CLU_060216_6_3_2"/>
<dbReference type="Proteomes" id="UP000001479">
    <property type="component" value="Chromosome"/>
</dbReference>
<dbReference type="GO" id="GO:0005737">
    <property type="term" value="C:cytoplasm"/>
    <property type="evidence" value="ECO:0007669"/>
    <property type="project" value="UniProtKB-SubCell"/>
</dbReference>
<dbReference type="GO" id="GO:0005524">
    <property type="term" value="F:ATP binding"/>
    <property type="evidence" value="ECO:0007669"/>
    <property type="project" value="UniProtKB-UniRule"/>
</dbReference>
<dbReference type="GO" id="GO:0046872">
    <property type="term" value="F:metal ion binding"/>
    <property type="evidence" value="ECO:0007669"/>
    <property type="project" value="UniProtKB-KW"/>
</dbReference>
<dbReference type="GO" id="GO:0004550">
    <property type="term" value="F:nucleoside diphosphate kinase activity"/>
    <property type="evidence" value="ECO:0007669"/>
    <property type="project" value="UniProtKB-UniRule"/>
</dbReference>
<dbReference type="GO" id="GO:0006241">
    <property type="term" value="P:CTP biosynthetic process"/>
    <property type="evidence" value="ECO:0007669"/>
    <property type="project" value="UniProtKB-UniRule"/>
</dbReference>
<dbReference type="GO" id="GO:0006183">
    <property type="term" value="P:GTP biosynthetic process"/>
    <property type="evidence" value="ECO:0007669"/>
    <property type="project" value="UniProtKB-UniRule"/>
</dbReference>
<dbReference type="GO" id="GO:0006228">
    <property type="term" value="P:UTP biosynthetic process"/>
    <property type="evidence" value="ECO:0007669"/>
    <property type="project" value="UniProtKB-UniRule"/>
</dbReference>
<dbReference type="CDD" id="cd04413">
    <property type="entry name" value="NDPk_I"/>
    <property type="match status" value="1"/>
</dbReference>
<dbReference type="FunFam" id="3.30.70.141:FF:000003">
    <property type="entry name" value="Nucleoside diphosphate kinase"/>
    <property type="match status" value="1"/>
</dbReference>
<dbReference type="Gene3D" id="3.30.70.141">
    <property type="entry name" value="Nucleoside diphosphate kinase-like domain"/>
    <property type="match status" value="1"/>
</dbReference>
<dbReference type="HAMAP" id="MF_00451">
    <property type="entry name" value="NDP_kinase"/>
    <property type="match status" value="1"/>
</dbReference>
<dbReference type="InterPro" id="IPR034907">
    <property type="entry name" value="NDK-like_dom"/>
</dbReference>
<dbReference type="InterPro" id="IPR036850">
    <property type="entry name" value="NDK-like_dom_sf"/>
</dbReference>
<dbReference type="InterPro" id="IPR001564">
    <property type="entry name" value="Nucleoside_diP_kinase"/>
</dbReference>
<dbReference type="InterPro" id="IPR023005">
    <property type="entry name" value="Nucleoside_diP_kinase_AS"/>
</dbReference>
<dbReference type="NCBIfam" id="NF001908">
    <property type="entry name" value="PRK00668.1"/>
    <property type="match status" value="1"/>
</dbReference>
<dbReference type="PANTHER" id="PTHR11349">
    <property type="entry name" value="NUCLEOSIDE DIPHOSPHATE KINASE"/>
    <property type="match status" value="1"/>
</dbReference>
<dbReference type="Pfam" id="PF00334">
    <property type="entry name" value="NDK"/>
    <property type="match status" value="1"/>
</dbReference>
<dbReference type="PRINTS" id="PR01243">
    <property type="entry name" value="NUCDPKINASE"/>
</dbReference>
<dbReference type="SMART" id="SM00562">
    <property type="entry name" value="NDK"/>
    <property type="match status" value="1"/>
</dbReference>
<dbReference type="SUPFAM" id="SSF54919">
    <property type="entry name" value="Nucleoside diphosphate kinase, NDK"/>
    <property type="match status" value="1"/>
</dbReference>
<dbReference type="PROSITE" id="PS00469">
    <property type="entry name" value="NDPK"/>
    <property type="match status" value="1"/>
</dbReference>
<dbReference type="PROSITE" id="PS51374">
    <property type="entry name" value="NDPK_LIKE"/>
    <property type="match status" value="1"/>
</dbReference>
<comment type="function">
    <text evidence="1">Major role in the synthesis of nucleoside triphosphates other than ATP. The ATP gamma phosphate is transferred to the NDP beta phosphate via a ping-pong mechanism, using a phosphorylated active-site intermediate.</text>
</comment>
<comment type="catalytic activity">
    <reaction evidence="1">
        <text>a 2'-deoxyribonucleoside 5'-diphosphate + ATP = a 2'-deoxyribonucleoside 5'-triphosphate + ADP</text>
        <dbReference type="Rhea" id="RHEA:44640"/>
        <dbReference type="ChEBI" id="CHEBI:30616"/>
        <dbReference type="ChEBI" id="CHEBI:61560"/>
        <dbReference type="ChEBI" id="CHEBI:73316"/>
        <dbReference type="ChEBI" id="CHEBI:456216"/>
        <dbReference type="EC" id="2.7.4.6"/>
    </reaction>
</comment>
<comment type="catalytic activity">
    <reaction evidence="1">
        <text>a ribonucleoside 5'-diphosphate + ATP = a ribonucleoside 5'-triphosphate + ADP</text>
        <dbReference type="Rhea" id="RHEA:18113"/>
        <dbReference type="ChEBI" id="CHEBI:30616"/>
        <dbReference type="ChEBI" id="CHEBI:57930"/>
        <dbReference type="ChEBI" id="CHEBI:61557"/>
        <dbReference type="ChEBI" id="CHEBI:456216"/>
        <dbReference type="EC" id="2.7.4.6"/>
    </reaction>
</comment>
<comment type="cofactor">
    <cofactor evidence="1">
        <name>Mg(2+)</name>
        <dbReference type="ChEBI" id="CHEBI:18420"/>
    </cofactor>
</comment>
<comment type="subcellular location">
    <subcellularLocation>
        <location evidence="1">Cytoplasm</location>
    </subcellularLocation>
</comment>
<comment type="similarity">
    <text evidence="1">Belongs to the NDK family.</text>
</comment>
<keyword id="KW-0067">ATP-binding</keyword>
<keyword id="KW-0963">Cytoplasm</keyword>
<keyword id="KW-0418">Kinase</keyword>
<keyword id="KW-0460">Magnesium</keyword>
<keyword id="KW-0479">Metal-binding</keyword>
<keyword id="KW-0546">Nucleotide metabolism</keyword>
<keyword id="KW-0547">Nucleotide-binding</keyword>
<keyword id="KW-0597">Phosphoprotein</keyword>
<keyword id="KW-0808">Transferase</keyword>
<protein>
    <recommendedName>
        <fullName evidence="1">Nucleoside diphosphate kinase</fullName>
        <shortName evidence="1">NDK</shortName>
        <shortName evidence="1">NDP kinase</shortName>
        <ecNumber evidence="1">2.7.4.6</ecNumber>
    </recommendedName>
    <alternativeName>
        <fullName evidence="1">Nucleoside-2-P kinase</fullName>
    </alternativeName>
</protein>
<gene>
    <name evidence="1" type="primary">ndk</name>
    <name type="ordered locus">M164_1915</name>
</gene>
<feature type="chain" id="PRO_1000206224" description="Nucleoside diphosphate kinase">
    <location>
        <begin position="1"/>
        <end position="138"/>
    </location>
</feature>
<feature type="active site" description="Pros-phosphohistidine intermediate" evidence="1">
    <location>
        <position position="117"/>
    </location>
</feature>
<feature type="binding site" evidence="1">
    <location>
        <position position="11"/>
    </location>
    <ligand>
        <name>ATP</name>
        <dbReference type="ChEBI" id="CHEBI:30616"/>
    </ligand>
</feature>
<feature type="binding site" evidence="1">
    <location>
        <position position="59"/>
    </location>
    <ligand>
        <name>ATP</name>
        <dbReference type="ChEBI" id="CHEBI:30616"/>
    </ligand>
</feature>
<feature type="binding site" evidence="1">
    <location>
        <position position="87"/>
    </location>
    <ligand>
        <name>ATP</name>
        <dbReference type="ChEBI" id="CHEBI:30616"/>
    </ligand>
</feature>
<feature type="binding site" evidence="1">
    <location>
        <position position="93"/>
    </location>
    <ligand>
        <name>ATP</name>
        <dbReference type="ChEBI" id="CHEBI:30616"/>
    </ligand>
</feature>
<feature type="binding site" evidence="1">
    <location>
        <position position="104"/>
    </location>
    <ligand>
        <name>ATP</name>
        <dbReference type="ChEBI" id="CHEBI:30616"/>
    </ligand>
</feature>
<feature type="binding site" evidence="1">
    <location>
        <position position="114"/>
    </location>
    <ligand>
        <name>ATP</name>
        <dbReference type="ChEBI" id="CHEBI:30616"/>
    </ligand>
</feature>
<organism>
    <name type="scientific">Saccharolobus islandicus (strain M.16.4 / Kamchatka #3)</name>
    <name type="common">Sulfolobus islandicus</name>
    <dbReference type="NCBI Taxonomy" id="426118"/>
    <lineage>
        <taxon>Archaea</taxon>
        <taxon>Thermoproteota</taxon>
        <taxon>Thermoprotei</taxon>
        <taxon>Sulfolobales</taxon>
        <taxon>Sulfolobaceae</taxon>
        <taxon>Saccharolobus</taxon>
    </lineage>
</organism>
<evidence type="ECO:0000255" key="1">
    <source>
        <dbReference type="HAMAP-Rule" id="MF_00451"/>
    </source>
</evidence>
<sequence>MVMQRTFVMIKPDGVKRGLIGEIISRFEKRGLKIVSLKMVKMSRDIAEKLYDEHKGKSFFEELVNYVTSGPVVCMVIEGDDVVQVIRRMIGNTDPKEAPPGTIRGDYALSKSENVIHASDSIEKAQREMSLFFDKSDL</sequence>
<proteinExistence type="inferred from homology"/>